<gene>
    <name evidence="1" type="primary">rrp3</name>
    <name type="ORF">AFUA_1G06220</name>
</gene>
<evidence type="ECO:0000250" key="1">
    <source>
        <dbReference type="UniProtKB" id="P38712"/>
    </source>
</evidence>
<evidence type="ECO:0000255" key="2">
    <source>
        <dbReference type="PROSITE-ProRule" id="PRU00541"/>
    </source>
</evidence>
<evidence type="ECO:0000255" key="3">
    <source>
        <dbReference type="PROSITE-ProRule" id="PRU00542"/>
    </source>
</evidence>
<evidence type="ECO:0000256" key="4">
    <source>
        <dbReference type="SAM" id="MobiDB-lite"/>
    </source>
</evidence>
<evidence type="ECO:0000305" key="5"/>
<comment type="function">
    <text evidence="1">ATP-dependent rRNA helicase required for pre-ribosomal RNA processing. Involved in the maturation of the 35S-pre-rRNA and to its cleavage to mature 18S rRNA.</text>
</comment>
<comment type="catalytic activity">
    <reaction evidence="1">
        <text>ATP + H2O = ADP + phosphate + H(+)</text>
        <dbReference type="Rhea" id="RHEA:13065"/>
        <dbReference type="ChEBI" id="CHEBI:15377"/>
        <dbReference type="ChEBI" id="CHEBI:15378"/>
        <dbReference type="ChEBI" id="CHEBI:30616"/>
        <dbReference type="ChEBI" id="CHEBI:43474"/>
        <dbReference type="ChEBI" id="CHEBI:456216"/>
        <dbReference type="EC" id="3.6.4.13"/>
    </reaction>
</comment>
<comment type="subunit">
    <text evidence="1">Interacts with the SSU processome.</text>
</comment>
<comment type="subcellular location">
    <subcellularLocation>
        <location evidence="5">Nucleus</location>
    </subcellularLocation>
</comment>
<comment type="domain">
    <text evidence="5">The Q motif is unique to and characteristic of the DEAD box family of RNA helicases and controls ATP binding and hydrolysis.</text>
</comment>
<comment type="similarity">
    <text evidence="5">Belongs to the DEAD box helicase family. DDX47/RRP3 subfamily.</text>
</comment>
<reference key="1">
    <citation type="journal article" date="2005" name="Nature">
        <title>Genomic sequence of the pathogenic and allergenic filamentous fungus Aspergillus fumigatus.</title>
        <authorList>
            <person name="Nierman W.C."/>
            <person name="Pain A."/>
            <person name="Anderson M.J."/>
            <person name="Wortman J.R."/>
            <person name="Kim H.S."/>
            <person name="Arroyo J."/>
            <person name="Berriman M."/>
            <person name="Abe K."/>
            <person name="Archer D.B."/>
            <person name="Bermejo C."/>
            <person name="Bennett J.W."/>
            <person name="Bowyer P."/>
            <person name="Chen D."/>
            <person name="Collins M."/>
            <person name="Coulsen R."/>
            <person name="Davies R."/>
            <person name="Dyer P.S."/>
            <person name="Farman M.L."/>
            <person name="Fedorova N."/>
            <person name="Fedorova N.D."/>
            <person name="Feldblyum T.V."/>
            <person name="Fischer R."/>
            <person name="Fosker N."/>
            <person name="Fraser A."/>
            <person name="Garcia J.L."/>
            <person name="Garcia M.J."/>
            <person name="Goble A."/>
            <person name="Goldman G.H."/>
            <person name="Gomi K."/>
            <person name="Griffith-Jones S."/>
            <person name="Gwilliam R."/>
            <person name="Haas B.J."/>
            <person name="Haas H."/>
            <person name="Harris D.E."/>
            <person name="Horiuchi H."/>
            <person name="Huang J."/>
            <person name="Humphray S."/>
            <person name="Jimenez J."/>
            <person name="Keller N."/>
            <person name="Khouri H."/>
            <person name="Kitamoto K."/>
            <person name="Kobayashi T."/>
            <person name="Konzack S."/>
            <person name="Kulkarni R."/>
            <person name="Kumagai T."/>
            <person name="Lafton A."/>
            <person name="Latge J.-P."/>
            <person name="Li W."/>
            <person name="Lord A."/>
            <person name="Lu C."/>
            <person name="Majoros W.H."/>
            <person name="May G.S."/>
            <person name="Miller B.L."/>
            <person name="Mohamoud Y."/>
            <person name="Molina M."/>
            <person name="Monod M."/>
            <person name="Mouyna I."/>
            <person name="Mulligan S."/>
            <person name="Murphy L.D."/>
            <person name="O'Neil S."/>
            <person name="Paulsen I."/>
            <person name="Penalva M.A."/>
            <person name="Pertea M."/>
            <person name="Price C."/>
            <person name="Pritchard B.L."/>
            <person name="Quail M.A."/>
            <person name="Rabbinowitsch E."/>
            <person name="Rawlins N."/>
            <person name="Rajandream M.A."/>
            <person name="Reichard U."/>
            <person name="Renauld H."/>
            <person name="Robson G.D."/>
            <person name="Rodriguez de Cordoba S."/>
            <person name="Rodriguez-Pena J.M."/>
            <person name="Ronning C.M."/>
            <person name="Rutter S."/>
            <person name="Salzberg S.L."/>
            <person name="Sanchez M."/>
            <person name="Sanchez-Ferrero J.C."/>
            <person name="Saunders D."/>
            <person name="Seeger K."/>
            <person name="Squares R."/>
            <person name="Squares S."/>
            <person name="Takeuchi M."/>
            <person name="Tekaia F."/>
            <person name="Turner G."/>
            <person name="Vazquez de Aldana C.R."/>
            <person name="Weidman J."/>
            <person name="White O."/>
            <person name="Woodward J.R."/>
            <person name="Yu J.-H."/>
            <person name="Fraser C.M."/>
            <person name="Galagan J.E."/>
            <person name="Asai K."/>
            <person name="Machida M."/>
            <person name="Hall N."/>
            <person name="Barrell B.G."/>
            <person name="Denning D.W."/>
        </authorList>
    </citation>
    <scope>NUCLEOTIDE SEQUENCE [LARGE SCALE GENOMIC DNA]</scope>
    <source>
        <strain>ATCC MYA-4609 / CBS 101355 / FGSC A1100 / Af293</strain>
    </source>
</reference>
<proteinExistence type="inferred from homology"/>
<dbReference type="EC" id="3.6.4.13" evidence="1"/>
<dbReference type="EMBL" id="AAHF01000007">
    <property type="protein sequence ID" value="EAL88333.1"/>
    <property type="molecule type" value="Genomic_DNA"/>
</dbReference>
<dbReference type="RefSeq" id="XP_750371.1">
    <property type="nucleotide sequence ID" value="XM_745278.1"/>
</dbReference>
<dbReference type="SMR" id="Q4WJE9"/>
<dbReference type="FunCoup" id="Q4WJE9">
    <property type="interactions" value="1125"/>
</dbReference>
<dbReference type="STRING" id="330879.Q4WJE9"/>
<dbReference type="EnsemblFungi" id="EAL88333">
    <property type="protein sequence ID" value="EAL88333"/>
    <property type="gene ID" value="AFUA_1G06220"/>
</dbReference>
<dbReference type="GeneID" id="3507630"/>
<dbReference type="KEGG" id="afm:AFUA_1G06220"/>
<dbReference type="VEuPathDB" id="FungiDB:Afu1g06220"/>
<dbReference type="eggNOG" id="KOG0330">
    <property type="taxonomic scope" value="Eukaryota"/>
</dbReference>
<dbReference type="HOGENOM" id="CLU_003041_1_1_1"/>
<dbReference type="InParanoid" id="Q4WJE9"/>
<dbReference type="OMA" id="GIGIKCC"/>
<dbReference type="OrthoDB" id="10261904at2759"/>
<dbReference type="Proteomes" id="UP000002530">
    <property type="component" value="Chromosome 1"/>
</dbReference>
<dbReference type="GO" id="GO:0005634">
    <property type="term" value="C:nucleus"/>
    <property type="evidence" value="ECO:0000318"/>
    <property type="project" value="GO_Central"/>
</dbReference>
<dbReference type="GO" id="GO:0005524">
    <property type="term" value="F:ATP binding"/>
    <property type="evidence" value="ECO:0007669"/>
    <property type="project" value="UniProtKB-KW"/>
</dbReference>
<dbReference type="GO" id="GO:0016887">
    <property type="term" value="F:ATP hydrolysis activity"/>
    <property type="evidence" value="ECO:0007669"/>
    <property type="project" value="RHEA"/>
</dbReference>
<dbReference type="GO" id="GO:0003723">
    <property type="term" value="F:RNA binding"/>
    <property type="evidence" value="ECO:0007669"/>
    <property type="project" value="UniProtKB-KW"/>
</dbReference>
<dbReference type="GO" id="GO:0003724">
    <property type="term" value="F:RNA helicase activity"/>
    <property type="evidence" value="ECO:0007669"/>
    <property type="project" value="UniProtKB-EC"/>
</dbReference>
<dbReference type="GO" id="GO:0006364">
    <property type="term" value="P:rRNA processing"/>
    <property type="evidence" value="ECO:0000318"/>
    <property type="project" value="GO_Central"/>
</dbReference>
<dbReference type="CDD" id="cd17954">
    <property type="entry name" value="DEADc_DDX47"/>
    <property type="match status" value="1"/>
</dbReference>
<dbReference type="CDD" id="cd18787">
    <property type="entry name" value="SF2_C_DEAD"/>
    <property type="match status" value="1"/>
</dbReference>
<dbReference type="Gene3D" id="3.40.50.300">
    <property type="entry name" value="P-loop containing nucleotide triphosphate hydrolases"/>
    <property type="match status" value="2"/>
</dbReference>
<dbReference type="InterPro" id="IPR044765">
    <property type="entry name" value="DDX47/Rrp3_DEADc"/>
</dbReference>
<dbReference type="InterPro" id="IPR011545">
    <property type="entry name" value="DEAD/DEAH_box_helicase_dom"/>
</dbReference>
<dbReference type="InterPro" id="IPR050079">
    <property type="entry name" value="DEAD_box_RNA_helicase"/>
</dbReference>
<dbReference type="InterPro" id="IPR014001">
    <property type="entry name" value="Helicase_ATP-bd"/>
</dbReference>
<dbReference type="InterPro" id="IPR001650">
    <property type="entry name" value="Helicase_C-like"/>
</dbReference>
<dbReference type="InterPro" id="IPR027417">
    <property type="entry name" value="P-loop_NTPase"/>
</dbReference>
<dbReference type="InterPro" id="IPR000629">
    <property type="entry name" value="RNA-helicase_DEAD-box_CS"/>
</dbReference>
<dbReference type="InterPro" id="IPR014014">
    <property type="entry name" value="RNA_helicase_DEAD_Q_motif"/>
</dbReference>
<dbReference type="PANTHER" id="PTHR47959">
    <property type="entry name" value="ATP-DEPENDENT RNA HELICASE RHLE-RELATED"/>
    <property type="match status" value="1"/>
</dbReference>
<dbReference type="PANTHER" id="PTHR47959:SF20">
    <property type="entry name" value="RNA HELICASE"/>
    <property type="match status" value="1"/>
</dbReference>
<dbReference type="Pfam" id="PF00270">
    <property type="entry name" value="DEAD"/>
    <property type="match status" value="1"/>
</dbReference>
<dbReference type="Pfam" id="PF00271">
    <property type="entry name" value="Helicase_C"/>
    <property type="match status" value="1"/>
</dbReference>
<dbReference type="SMART" id="SM00487">
    <property type="entry name" value="DEXDc"/>
    <property type="match status" value="1"/>
</dbReference>
<dbReference type="SMART" id="SM00490">
    <property type="entry name" value="HELICc"/>
    <property type="match status" value="1"/>
</dbReference>
<dbReference type="SUPFAM" id="SSF52540">
    <property type="entry name" value="P-loop containing nucleoside triphosphate hydrolases"/>
    <property type="match status" value="1"/>
</dbReference>
<dbReference type="PROSITE" id="PS00039">
    <property type="entry name" value="DEAD_ATP_HELICASE"/>
    <property type="match status" value="1"/>
</dbReference>
<dbReference type="PROSITE" id="PS51192">
    <property type="entry name" value="HELICASE_ATP_BIND_1"/>
    <property type="match status" value="1"/>
</dbReference>
<dbReference type="PROSITE" id="PS51194">
    <property type="entry name" value="HELICASE_CTER"/>
    <property type="match status" value="1"/>
</dbReference>
<dbReference type="PROSITE" id="PS51195">
    <property type="entry name" value="Q_MOTIF"/>
    <property type="match status" value="1"/>
</dbReference>
<accession>Q4WJE9</accession>
<sequence length="472" mass="52328">MRDVKKRKIAHEAPEHGSDTESTSSHKSVAQQDDPLETQDEATATESRPAPKSFKDLGIIDQLCEACETMGYKAPTPIQAESIPLALQGRDLIGLAETGSGKTAAFALPILQALMENPQSFFGLILAPTRELAFQISKSFESLGSTINVRCAVIVGGMDMVSQSIALGKKPHIIVATPGRLLDHLENTKGFSLRTLKYLVMDEADRLLDMDFGPLLDKILKVLPRERRTFLFSATMSSKVESLQRASLSNPLRVSVSSNKYQTVSTLLQSYLFLPHKHKDIYLVYLLNEFVGQSTIIFTRTVHETQRISFLLRSLGFGAIPLHGQLSQSARLGALGKFRSRSRDILVATDVAARGLDIPSVDVVLNFDLPTDSKTYVHRVGRTARAGKSGVAISFVTQYDVEIWLRIEGALGKKLKEYELEKDEVMVLAERVGEAQRQAIMEMKNFDEKRGTKAKKFGKGKRSRDEMDQEEG</sequence>
<keyword id="KW-0067">ATP-binding</keyword>
<keyword id="KW-0347">Helicase</keyword>
<keyword id="KW-0378">Hydrolase</keyword>
<keyword id="KW-0547">Nucleotide-binding</keyword>
<keyword id="KW-0539">Nucleus</keyword>
<keyword id="KW-1185">Reference proteome</keyword>
<keyword id="KW-0690">Ribosome biogenesis</keyword>
<keyword id="KW-0694">RNA-binding</keyword>
<keyword id="KW-0698">rRNA processing</keyword>
<name>RRP3_ASPFU</name>
<organism>
    <name type="scientific">Aspergillus fumigatus (strain ATCC MYA-4609 / CBS 101355 / FGSC A1100 / Af293)</name>
    <name type="common">Neosartorya fumigata</name>
    <dbReference type="NCBI Taxonomy" id="330879"/>
    <lineage>
        <taxon>Eukaryota</taxon>
        <taxon>Fungi</taxon>
        <taxon>Dikarya</taxon>
        <taxon>Ascomycota</taxon>
        <taxon>Pezizomycotina</taxon>
        <taxon>Eurotiomycetes</taxon>
        <taxon>Eurotiomycetidae</taxon>
        <taxon>Eurotiales</taxon>
        <taxon>Aspergillaceae</taxon>
        <taxon>Aspergillus</taxon>
        <taxon>Aspergillus subgen. Fumigati</taxon>
    </lineage>
</organism>
<protein>
    <recommendedName>
        <fullName evidence="5">ATP-dependent rRNA helicase rrp3</fullName>
        <ecNumber evidence="1">3.6.4.13</ecNumber>
    </recommendedName>
</protein>
<feature type="chain" id="PRO_0000232268" description="ATP-dependent rRNA helicase rrp3">
    <location>
        <begin position="1"/>
        <end position="472"/>
    </location>
</feature>
<feature type="domain" description="Helicase ATP-binding" evidence="2">
    <location>
        <begin position="83"/>
        <end position="254"/>
    </location>
</feature>
<feature type="domain" description="Helicase C-terminal" evidence="3">
    <location>
        <begin position="282"/>
        <end position="426"/>
    </location>
</feature>
<feature type="region of interest" description="Disordered" evidence="4">
    <location>
        <begin position="1"/>
        <end position="52"/>
    </location>
</feature>
<feature type="region of interest" description="Disordered" evidence="4">
    <location>
        <begin position="444"/>
        <end position="472"/>
    </location>
</feature>
<feature type="short sequence motif" description="Q motif" evidence="5">
    <location>
        <begin position="52"/>
        <end position="80"/>
    </location>
</feature>
<feature type="short sequence motif" description="DEAD box" evidence="5">
    <location>
        <begin position="202"/>
        <end position="205"/>
    </location>
</feature>
<feature type="compositionally biased region" description="Basic and acidic residues" evidence="4">
    <location>
        <begin position="10"/>
        <end position="19"/>
    </location>
</feature>
<feature type="compositionally biased region" description="Polar residues" evidence="4">
    <location>
        <begin position="20"/>
        <end position="31"/>
    </location>
</feature>
<feature type="compositionally biased region" description="Basic residues" evidence="4">
    <location>
        <begin position="452"/>
        <end position="462"/>
    </location>
</feature>
<feature type="binding site" evidence="2">
    <location>
        <begin position="96"/>
        <end position="103"/>
    </location>
    <ligand>
        <name>ATP</name>
        <dbReference type="ChEBI" id="CHEBI:30616"/>
    </ligand>
</feature>